<evidence type="ECO:0000255" key="1">
    <source>
        <dbReference type="HAMAP-Rule" id="MF_00815"/>
    </source>
</evidence>
<evidence type="ECO:0000305" key="2"/>
<reference key="1">
    <citation type="journal article" date="2003" name="Proc. Natl. Acad. Sci. U.S.A.">
        <title>The complete genome sequence of Chromobacterium violaceum reveals remarkable and exploitable bacterial adaptability.</title>
        <authorList>
            <person name="Vasconcelos A.T.R."/>
            <person name="de Almeida D.F."/>
            <person name="Hungria M."/>
            <person name="Guimaraes C.T."/>
            <person name="Antonio R.V."/>
            <person name="Almeida F.C."/>
            <person name="de Almeida L.G.P."/>
            <person name="de Almeida R."/>
            <person name="Alves-Gomes J.A."/>
            <person name="Andrade E.M."/>
            <person name="Araripe J."/>
            <person name="de Araujo M.F.F."/>
            <person name="Astolfi-Filho S."/>
            <person name="Azevedo V."/>
            <person name="Baptista A.J."/>
            <person name="Bataus L.A.M."/>
            <person name="Batista J.S."/>
            <person name="Belo A."/>
            <person name="van den Berg C."/>
            <person name="Bogo M."/>
            <person name="Bonatto S."/>
            <person name="Bordignon J."/>
            <person name="Brigido M.M."/>
            <person name="Brito C.A."/>
            <person name="Brocchi M."/>
            <person name="Burity H.A."/>
            <person name="Camargo A.A."/>
            <person name="Cardoso D.D.P."/>
            <person name="Carneiro N.P."/>
            <person name="Carraro D.M."/>
            <person name="Carvalho C.M.B."/>
            <person name="Cascardo J.C.M."/>
            <person name="Cavada B.S."/>
            <person name="Chueire L.M.O."/>
            <person name="Creczynski-Pasa T.B."/>
            <person name="Cunha-Junior N.C."/>
            <person name="Fagundes N."/>
            <person name="Falcao C.L."/>
            <person name="Fantinatti F."/>
            <person name="Farias I.P."/>
            <person name="Felipe M.S.S."/>
            <person name="Ferrari L.P."/>
            <person name="Ferro J.A."/>
            <person name="Ferro M.I.T."/>
            <person name="Franco G.R."/>
            <person name="Freitas N.S.A."/>
            <person name="Furlan L.R."/>
            <person name="Gazzinelli R.T."/>
            <person name="Gomes E.A."/>
            <person name="Goncalves P.R."/>
            <person name="Grangeiro T.B."/>
            <person name="Grattapaglia D."/>
            <person name="Grisard E.C."/>
            <person name="Hanna E.S."/>
            <person name="Jardim S.N."/>
            <person name="Laurino J."/>
            <person name="Leoi L.C.T."/>
            <person name="Lima L.F.A."/>
            <person name="Loureiro M.F."/>
            <person name="Lyra M.C.C.P."/>
            <person name="Madeira H.M.F."/>
            <person name="Manfio G.P."/>
            <person name="Maranhao A.Q."/>
            <person name="Martins W.S."/>
            <person name="di Mauro S.M.Z."/>
            <person name="de Medeiros S.R.B."/>
            <person name="Meissner R.V."/>
            <person name="Moreira M.A.M."/>
            <person name="Nascimento F.F."/>
            <person name="Nicolas M.F."/>
            <person name="Oliveira J.G."/>
            <person name="Oliveira S.C."/>
            <person name="Paixao R.F.C."/>
            <person name="Parente J.A."/>
            <person name="Pedrosa F.O."/>
            <person name="Pena S.D.J."/>
            <person name="Pereira J.O."/>
            <person name="Pereira M."/>
            <person name="Pinto L.S.R.C."/>
            <person name="Pinto L.S."/>
            <person name="Porto J.I.R."/>
            <person name="Potrich D.P."/>
            <person name="Ramalho-Neto C.E."/>
            <person name="Reis A.M.M."/>
            <person name="Rigo L.U."/>
            <person name="Rondinelli E."/>
            <person name="Santos E.B.P."/>
            <person name="Santos F.R."/>
            <person name="Schneider M.P.C."/>
            <person name="Seuanez H.N."/>
            <person name="Silva A.M.R."/>
            <person name="da Silva A.L.C."/>
            <person name="Silva D.W."/>
            <person name="Silva R."/>
            <person name="Simoes I.C."/>
            <person name="Simon D."/>
            <person name="Soares C.M.A."/>
            <person name="Soares R.B.A."/>
            <person name="Souza E.M."/>
            <person name="Souza K.R.L."/>
            <person name="Souza R.C."/>
            <person name="Steffens M.B.R."/>
            <person name="Steindel M."/>
            <person name="Teixeira S.R."/>
            <person name="Urmenyi T."/>
            <person name="Vettore A."/>
            <person name="Wassem R."/>
            <person name="Zaha A."/>
            <person name="Simpson A.J.G."/>
        </authorList>
    </citation>
    <scope>NUCLEOTIDE SEQUENCE [LARGE SCALE GENOMIC DNA]</scope>
    <source>
        <strain>ATCC 12472 / DSM 30191 / JCM 1249 / CCUG 213 / NBRC 12614 / NCIMB 9131 / NCTC 9757 / MK</strain>
    </source>
</reference>
<keyword id="KW-0066">ATP synthesis</keyword>
<keyword id="KW-0997">Cell inner membrane</keyword>
<keyword id="KW-1003">Cell membrane</keyword>
<keyword id="KW-0139">CF(1)</keyword>
<keyword id="KW-0375">Hydrogen ion transport</keyword>
<keyword id="KW-0406">Ion transport</keyword>
<keyword id="KW-0472">Membrane</keyword>
<keyword id="KW-1185">Reference proteome</keyword>
<keyword id="KW-0813">Transport</keyword>
<sequence>MAVGKEILTKIRSVQNTQKITRAMQMVSTSKMRKTQERMRAARPYAEKVRTVMAHLAQANAELGHPLLARRETIKRAGIILVSSDKGLCGGLNVNSFKRFFGKVKELQDQGIEVDVCCLGQKGLAAAQRARLNVVASAVHLGDMPKMEKLIGPLTVLFRQYAEGELDAVYIVYSSFVNTMKQEPALEQLLPLTPHHMVVEHSHSWDYLYEPDAPTLMEFLVRRYLESVVYQALAENMASEQAARMVAMKAATDNAGNTIKQLRLVYNKARQAAITTELSEIVAGAAAV</sequence>
<gene>
    <name evidence="1" type="primary">atpG</name>
    <name type="ordered locus">CV_0671</name>
</gene>
<protein>
    <recommendedName>
        <fullName evidence="1">ATP synthase gamma chain</fullName>
    </recommendedName>
    <alternativeName>
        <fullName evidence="1">ATP synthase F1 sector gamma subunit</fullName>
    </alternativeName>
    <alternativeName>
        <fullName evidence="1">F-ATPase gamma subunit</fullName>
    </alternativeName>
</protein>
<organism>
    <name type="scientific">Chromobacterium violaceum (strain ATCC 12472 / DSM 30191 / JCM 1249 / CCUG 213 / NBRC 12614 / NCIMB 9131 / NCTC 9757 / MK)</name>
    <dbReference type="NCBI Taxonomy" id="243365"/>
    <lineage>
        <taxon>Bacteria</taxon>
        <taxon>Pseudomonadati</taxon>
        <taxon>Pseudomonadota</taxon>
        <taxon>Betaproteobacteria</taxon>
        <taxon>Neisseriales</taxon>
        <taxon>Chromobacteriaceae</taxon>
        <taxon>Chromobacterium</taxon>
    </lineage>
</organism>
<feature type="chain" id="PRO_0000073264" description="ATP synthase gamma chain">
    <location>
        <begin position="1"/>
        <end position="288"/>
    </location>
</feature>
<name>ATPG_CHRVO</name>
<dbReference type="EMBL" id="AE016825">
    <property type="protein sequence ID" value="AAQ58347.1"/>
    <property type="status" value="ALT_INIT"/>
    <property type="molecule type" value="Genomic_DNA"/>
</dbReference>
<dbReference type="RefSeq" id="WP_011134226.1">
    <property type="nucleotide sequence ID" value="NC_005085.1"/>
</dbReference>
<dbReference type="SMR" id="Q7P096"/>
<dbReference type="STRING" id="243365.CV_0671"/>
<dbReference type="GeneID" id="66365435"/>
<dbReference type="KEGG" id="cvi:CV_0671"/>
<dbReference type="eggNOG" id="COG0224">
    <property type="taxonomic scope" value="Bacteria"/>
</dbReference>
<dbReference type="HOGENOM" id="CLU_050669_0_1_4"/>
<dbReference type="OrthoDB" id="9812769at2"/>
<dbReference type="Proteomes" id="UP000001424">
    <property type="component" value="Chromosome"/>
</dbReference>
<dbReference type="GO" id="GO:0005886">
    <property type="term" value="C:plasma membrane"/>
    <property type="evidence" value="ECO:0007669"/>
    <property type="project" value="UniProtKB-SubCell"/>
</dbReference>
<dbReference type="GO" id="GO:0045259">
    <property type="term" value="C:proton-transporting ATP synthase complex"/>
    <property type="evidence" value="ECO:0007669"/>
    <property type="project" value="UniProtKB-KW"/>
</dbReference>
<dbReference type="GO" id="GO:0005524">
    <property type="term" value="F:ATP binding"/>
    <property type="evidence" value="ECO:0007669"/>
    <property type="project" value="UniProtKB-UniRule"/>
</dbReference>
<dbReference type="GO" id="GO:0046933">
    <property type="term" value="F:proton-transporting ATP synthase activity, rotational mechanism"/>
    <property type="evidence" value="ECO:0007669"/>
    <property type="project" value="UniProtKB-UniRule"/>
</dbReference>
<dbReference type="GO" id="GO:0042777">
    <property type="term" value="P:proton motive force-driven plasma membrane ATP synthesis"/>
    <property type="evidence" value="ECO:0007669"/>
    <property type="project" value="UniProtKB-UniRule"/>
</dbReference>
<dbReference type="CDD" id="cd12151">
    <property type="entry name" value="F1-ATPase_gamma"/>
    <property type="match status" value="1"/>
</dbReference>
<dbReference type="FunFam" id="1.10.287.80:FF:000005">
    <property type="entry name" value="ATP synthase gamma chain"/>
    <property type="match status" value="1"/>
</dbReference>
<dbReference type="Gene3D" id="3.40.1380.10">
    <property type="match status" value="1"/>
</dbReference>
<dbReference type="Gene3D" id="1.10.287.80">
    <property type="entry name" value="ATP synthase, gamma subunit, helix hairpin domain"/>
    <property type="match status" value="1"/>
</dbReference>
<dbReference type="HAMAP" id="MF_00815">
    <property type="entry name" value="ATP_synth_gamma_bact"/>
    <property type="match status" value="1"/>
</dbReference>
<dbReference type="InterPro" id="IPR035968">
    <property type="entry name" value="ATP_synth_F1_ATPase_gsu"/>
</dbReference>
<dbReference type="InterPro" id="IPR000131">
    <property type="entry name" value="ATP_synth_F1_gsu"/>
</dbReference>
<dbReference type="InterPro" id="IPR023632">
    <property type="entry name" value="ATP_synth_F1_gsu_CS"/>
</dbReference>
<dbReference type="NCBIfam" id="TIGR01146">
    <property type="entry name" value="ATPsyn_F1gamma"/>
    <property type="match status" value="1"/>
</dbReference>
<dbReference type="NCBIfam" id="NF004144">
    <property type="entry name" value="PRK05621.1-1"/>
    <property type="match status" value="1"/>
</dbReference>
<dbReference type="PANTHER" id="PTHR11693">
    <property type="entry name" value="ATP SYNTHASE GAMMA CHAIN"/>
    <property type="match status" value="1"/>
</dbReference>
<dbReference type="PANTHER" id="PTHR11693:SF22">
    <property type="entry name" value="ATP SYNTHASE SUBUNIT GAMMA, MITOCHONDRIAL"/>
    <property type="match status" value="1"/>
</dbReference>
<dbReference type="Pfam" id="PF00231">
    <property type="entry name" value="ATP-synt"/>
    <property type="match status" value="1"/>
</dbReference>
<dbReference type="PRINTS" id="PR00126">
    <property type="entry name" value="ATPASEGAMMA"/>
</dbReference>
<dbReference type="SUPFAM" id="SSF52943">
    <property type="entry name" value="ATP synthase (F1-ATPase), gamma subunit"/>
    <property type="match status" value="1"/>
</dbReference>
<dbReference type="PROSITE" id="PS00153">
    <property type="entry name" value="ATPASE_GAMMA"/>
    <property type="match status" value="1"/>
</dbReference>
<comment type="function">
    <text evidence="1">Produces ATP from ADP in the presence of a proton gradient across the membrane. The gamma chain is believed to be important in regulating ATPase activity and the flow of protons through the CF(0) complex.</text>
</comment>
<comment type="subunit">
    <text evidence="1">F-type ATPases have 2 components, CF(1) - the catalytic core - and CF(0) - the membrane proton channel. CF(1) has five subunits: alpha(3), beta(3), gamma(1), delta(1), epsilon(1). CF(0) has three main subunits: a, b and c.</text>
</comment>
<comment type="subcellular location">
    <subcellularLocation>
        <location evidence="1">Cell inner membrane</location>
        <topology evidence="1">Peripheral membrane protein</topology>
    </subcellularLocation>
</comment>
<comment type="similarity">
    <text evidence="1">Belongs to the ATPase gamma chain family.</text>
</comment>
<comment type="sequence caution" evidence="2">
    <conflict type="erroneous initiation">
        <sequence resource="EMBL-CDS" id="AAQ58347"/>
    </conflict>
</comment>
<accession>Q7P096</accession>
<proteinExistence type="inferred from homology"/>